<feature type="chain" id="PRO_0000333988" description="Cell division protein SepF">
    <location>
        <begin position="1"/>
        <end position="159"/>
    </location>
</feature>
<feature type="region of interest" description="Disordered" evidence="2">
    <location>
        <begin position="23"/>
        <end position="69"/>
    </location>
</feature>
<feature type="compositionally biased region" description="Low complexity" evidence="2">
    <location>
        <begin position="44"/>
        <end position="64"/>
    </location>
</feature>
<dbReference type="EMBL" id="AE014295">
    <property type="protein sequence ID" value="AAN23984.1"/>
    <property type="molecule type" value="Genomic_DNA"/>
</dbReference>
<dbReference type="RefSeq" id="NP_695348.1">
    <property type="nucleotide sequence ID" value="NC_004307.2"/>
</dbReference>
<dbReference type="RefSeq" id="WP_007053320.1">
    <property type="nucleotide sequence ID" value="NC_004307.2"/>
</dbReference>
<dbReference type="SMR" id="Q8G7W6"/>
<dbReference type="STRING" id="206672.BL0119"/>
<dbReference type="EnsemblBacteria" id="AAN23984">
    <property type="protein sequence ID" value="AAN23984"/>
    <property type="gene ID" value="BL0119"/>
</dbReference>
<dbReference type="KEGG" id="blo:BL0119"/>
<dbReference type="PATRIC" id="fig|206672.9.peg.128"/>
<dbReference type="HOGENOM" id="CLU_078499_0_2_11"/>
<dbReference type="OrthoDB" id="3731101at2"/>
<dbReference type="PhylomeDB" id="Q8G7W6"/>
<dbReference type="Proteomes" id="UP000000439">
    <property type="component" value="Chromosome"/>
</dbReference>
<dbReference type="GO" id="GO:0005737">
    <property type="term" value="C:cytoplasm"/>
    <property type="evidence" value="ECO:0007669"/>
    <property type="project" value="UniProtKB-SubCell"/>
</dbReference>
<dbReference type="GO" id="GO:0000917">
    <property type="term" value="P:division septum assembly"/>
    <property type="evidence" value="ECO:0007669"/>
    <property type="project" value="UniProtKB-KW"/>
</dbReference>
<dbReference type="GO" id="GO:0043093">
    <property type="term" value="P:FtsZ-dependent cytokinesis"/>
    <property type="evidence" value="ECO:0007669"/>
    <property type="project" value="UniProtKB-UniRule"/>
</dbReference>
<dbReference type="Gene3D" id="3.30.110.150">
    <property type="entry name" value="SepF-like protein"/>
    <property type="match status" value="1"/>
</dbReference>
<dbReference type="HAMAP" id="MF_01197">
    <property type="entry name" value="SepF"/>
    <property type="match status" value="1"/>
</dbReference>
<dbReference type="InterPro" id="IPR023052">
    <property type="entry name" value="Cell_div_SepF"/>
</dbReference>
<dbReference type="InterPro" id="IPR007561">
    <property type="entry name" value="Cell_div_SepF/SepF-rel"/>
</dbReference>
<dbReference type="InterPro" id="IPR038594">
    <property type="entry name" value="SepF-like_sf"/>
</dbReference>
<dbReference type="PANTHER" id="PTHR35798">
    <property type="entry name" value="CELL DIVISION PROTEIN SEPF"/>
    <property type="match status" value="1"/>
</dbReference>
<dbReference type="PANTHER" id="PTHR35798:SF1">
    <property type="entry name" value="CELL DIVISION PROTEIN SEPF"/>
    <property type="match status" value="1"/>
</dbReference>
<dbReference type="Pfam" id="PF04472">
    <property type="entry name" value="SepF"/>
    <property type="match status" value="1"/>
</dbReference>
<gene>
    <name evidence="1" type="primary">sepF</name>
    <name type="ordered locus">BL0119</name>
</gene>
<name>SEPF_BIFLO</name>
<keyword id="KW-0131">Cell cycle</keyword>
<keyword id="KW-0132">Cell division</keyword>
<keyword id="KW-0963">Cytoplasm</keyword>
<keyword id="KW-1185">Reference proteome</keyword>
<keyword id="KW-0717">Septation</keyword>
<evidence type="ECO:0000255" key="1">
    <source>
        <dbReference type="HAMAP-Rule" id="MF_01197"/>
    </source>
</evidence>
<evidence type="ECO:0000256" key="2">
    <source>
        <dbReference type="SAM" id="MobiDB-lite"/>
    </source>
</evidence>
<accession>Q8G7W6</accession>
<proteinExistence type="inferred from homology"/>
<sequence>MAGFMKNAMSYLGMSDVVDDEDDYIEEDEEQKPASKSAFDSDHTVTPLASTTAPAASSTTKPFPGGRVNRITTIHPKSYEDAQLVGRALRDGVPVVLNLTGVAEAVAYRIVDFSAGVVFGVRGSLERVTPRVFLLSPAQVNIKVEEPTKPASAHDLFAD</sequence>
<protein>
    <recommendedName>
        <fullName evidence="1">Cell division protein SepF</fullName>
    </recommendedName>
</protein>
<organism>
    <name type="scientific">Bifidobacterium longum (strain NCC 2705)</name>
    <dbReference type="NCBI Taxonomy" id="206672"/>
    <lineage>
        <taxon>Bacteria</taxon>
        <taxon>Bacillati</taxon>
        <taxon>Actinomycetota</taxon>
        <taxon>Actinomycetes</taxon>
        <taxon>Bifidobacteriales</taxon>
        <taxon>Bifidobacteriaceae</taxon>
        <taxon>Bifidobacterium</taxon>
    </lineage>
</organism>
<comment type="function">
    <text evidence="1">Cell division protein that is part of the divisome complex and is recruited early to the Z-ring. Probably stimulates Z-ring formation, perhaps through the cross-linking of FtsZ protofilaments. Its function overlaps with FtsA.</text>
</comment>
<comment type="subunit">
    <text evidence="1">Homodimer. Interacts with FtsZ.</text>
</comment>
<comment type="subcellular location">
    <subcellularLocation>
        <location evidence="1">Cytoplasm</location>
    </subcellularLocation>
    <text evidence="1">Localizes to the division site, in a FtsZ-dependent manner.</text>
</comment>
<comment type="similarity">
    <text evidence="1">Belongs to the SepF family.</text>
</comment>
<reference key="1">
    <citation type="journal article" date="2002" name="Proc. Natl. Acad. Sci. U.S.A.">
        <title>The genome sequence of Bifidobacterium longum reflects its adaptation to the human gastrointestinal tract.</title>
        <authorList>
            <person name="Schell M.A."/>
            <person name="Karmirantzou M."/>
            <person name="Snel B."/>
            <person name="Vilanova D."/>
            <person name="Berger B."/>
            <person name="Pessi G."/>
            <person name="Zwahlen M.-C."/>
            <person name="Desiere F."/>
            <person name="Bork P."/>
            <person name="Delley M."/>
            <person name="Pridmore R.D."/>
            <person name="Arigoni F."/>
        </authorList>
    </citation>
    <scope>NUCLEOTIDE SEQUENCE [LARGE SCALE GENOMIC DNA]</scope>
    <source>
        <strain>NCC 2705</strain>
    </source>
</reference>